<accession>C1A349</accession>
<proteinExistence type="inferred from homology"/>
<gene>
    <name evidence="1" type="primary">pth</name>
    <name type="ordered locus">RER_43260</name>
</gene>
<name>PTH_RHOE4</name>
<comment type="function">
    <text evidence="1">Hydrolyzes ribosome-free peptidyl-tRNAs (with 1 or more amino acids incorporated), which drop off the ribosome during protein synthesis, or as a result of ribosome stalling.</text>
</comment>
<comment type="function">
    <text evidence="1">Catalyzes the release of premature peptidyl moieties from peptidyl-tRNA molecules trapped in stalled 50S ribosomal subunits, and thus maintains levels of free tRNAs and 50S ribosomes.</text>
</comment>
<comment type="catalytic activity">
    <reaction evidence="1">
        <text>an N-acyl-L-alpha-aminoacyl-tRNA + H2O = an N-acyl-L-amino acid + a tRNA + H(+)</text>
        <dbReference type="Rhea" id="RHEA:54448"/>
        <dbReference type="Rhea" id="RHEA-COMP:10123"/>
        <dbReference type="Rhea" id="RHEA-COMP:13883"/>
        <dbReference type="ChEBI" id="CHEBI:15377"/>
        <dbReference type="ChEBI" id="CHEBI:15378"/>
        <dbReference type="ChEBI" id="CHEBI:59874"/>
        <dbReference type="ChEBI" id="CHEBI:78442"/>
        <dbReference type="ChEBI" id="CHEBI:138191"/>
        <dbReference type="EC" id="3.1.1.29"/>
    </reaction>
</comment>
<comment type="subunit">
    <text evidence="1">Monomer.</text>
</comment>
<comment type="subcellular location">
    <subcellularLocation>
        <location evidence="1">Cytoplasm</location>
    </subcellularLocation>
</comment>
<comment type="similarity">
    <text evidence="1">Belongs to the PTH family.</text>
</comment>
<protein>
    <recommendedName>
        <fullName evidence="1">Peptidyl-tRNA hydrolase</fullName>
        <shortName evidence="1">Pth</shortName>
        <ecNumber evidence="1">3.1.1.29</ecNumber>
    </recommendedName>
</protein>
<organism>
    <name type="scientific">Rhodococcus erythropolis (strain PR4 / NBRC 100887)</name>
    <dbReference type="NCBI Taxonomy" id="234621"/>
    <lineage>
        <taxon>Bacteria</taxon>
        <taxon>Bacillati</taxon>
        <taxon>Actinomycetota</taxon>
        <taxon>Actinomycetes</taxon>
        <taxon>Mycobacteriales</taxon>
        <taxon>Nocardiaceae</taxon>
        <taxon>Rhodococcus</taxon>
        <taxon>Rhodococcus erythropolis group</taxon>
    </lineage>
</organism>
<evidence type="ECO:0000255" key="1">
    <source>
        <dbReference type="HAMAP-Rule" id="MF_00083"/>
    </source>
</evidence>
<reference key="1">
    <citation type="submission" date="2005-03" db="EMBL/GenBank/DDBJ databases">
        <title>Comparison of the complete genome sequences of Rhodococcus erythropolis PR4 and Rhodococcus opacus B4.</title>
        <authorList>
            <person name="Takarada H."/>
            <person name="Sekine M."/>
            <person name="Hosoyama A."/>
            <person name="Yamada R."/>
            <person name="Fujisawa T."/>
            <person name="Omata S."/>
            <person name="Shimizu A."/>
            <person name="Tsukatani N."/>
            <person name="Tanikawa S."/>
            <person name="Fujita N."/>
            <person name="Harayama S."/>
        </authorList>
    </citation>
    <scope>NUCLEOTIDE SEQUENCE [LARGE SCALE GENOMIC DNA]</scope>
    <source>
        <strain>PR4 / NBRC 100887</strain>
    </source>
</reference>
<keyword id="KW-0963">Cytoplasm</keyword>
<keyword id="KW-0378">Hydrolase</keyword>
<keyword id="KW-0694">RNA-binding</keyword>
<keyword id="KW-0820">tRNA-binding</keyword>
<sequence>MSTDTALVIGLGNPGPQYEKTRHNVGFMVAGTLAGRMGGKFNVHKKSGAEIVEGRLAGRRVILGKPRSYMNLSGGAVAGLARFFSVDAANIIVVHDELDLDFGTIRLKLGGGEGGHNGLRSISSSLTTKDYLRTRVGIGRPPGRMDPADYVLKPFSSTERKELDLVCEEAADAVELLLELGLEAAQNRLH</sequence>
<feature type="chain" id="PRO_1000202595" description="Peptidyl-tRNA hydrolase">
    <location>
        <begin position="1"/>
        <end position="190"/>
    </location>
</feature>
<feature type="active site" description="Proton acceptor" evidence="1">
    <location>
        <position position="23"/>
    </location>
</feature>
<feature type="binding site" evidence="1">
    <location>
        <position position="18"/>
    </location>
    <ligand>
        <name>tRNA</name>
        <dbReference type="ChEBI" id="CHEBI:17843"/>
    </ligand>
</feature>
<feature type="binding site" evidence="1">
    <location>
        <position position="69"/>
    </location>
    <ligand>
        <name>tRNA</name>
        <dbReference type="ChEBI" id="CHEBI:17843"/>
    </ligand>
</feature>
<feature type="binding site" evidence="1">
    <location>
        <position position="71"/>
    </location>
    <ligand>
        <name>tRNA</name>
        <dbReference type="ChEBI" id="CHEBI:17843"/>
    </ligand>
</feature>
<feature type="binding site" evidence="1">
    <location>
        <position position="117"/>
    </location>
    <ligand>
        <name>tRNA</name>
        <dbReference type="ChEBI" id="CHEBI:17843"/>
    </ligand>
</feature>
<feature type="site" description="Discriminates between blocked and unblocked aminoacyl-tRNA" evidence="1">
    <location>
        <position position="13"/>
    </location>
</feature>
<feature type="site" description="Stabilizes the basic form of H active site to accept a proton" evidence="1">
    <location>
        <position position="96"/>
    </location>
</feature>
<dbReference type="EC" id="3.1.1.29" evidence="1"/>
<dbReference type="EMBL" id="AP008957">
    <property type="protein sequence ID" value="BAH35034.1"/>
    <property type="molecule type" value="Genomic_DNA"/>
</dbReference>
<dbReference type="RefSeq" id="WP_003946229.1">
    <property type="nucleotide sequence ID" value="NC_012490.1"/>
</dbReference>
<dbReference type="SMR" id="C1A349"/>
<dbReference type="GeneID" id="93801464"/>
<dbReference type="KEGG" id="rer:RER_43260"/>
<dbReference type="eggNOG" id="COG0193">
    <property type="taxonomic scope" value="Bacteria"/>
</dbReference>
<dbReference type="HOGENOM" id="CLU_062456_2_2_11"/>
<dbReference type="Proteomes" id="UP000002204">
    <property type="component" value="Chromosome"/>
</dbReference>
<dbReference type="GO" id="GO:0005737">
    <property type="term" value="C:cytoplasm"/>
    <property type="evidence" value="ECO:0007669"/>
    <property type="project" value="UniProtKB-SubCell"/>
</dbReference>
<dbReference type="GO" id="GO:0004045">
    <property type="term" value="F:peptidyl-tRNA hydrolase activity"/>
    <property type="evidence" value="ECO:0007669"/>
    <property type="project" value="UniProtKB-UniRule"/>
</dbReference>
<dbReference type="GO" id="GO:0000049">
    <property type="term" value="F:tRNA binding"/>
    <property type="evidence" value="ECO:0007669"/>
    <property type="project" value="UniProtKB-UniRule"/>
</dbReference>
<dbReference type="GO" id="GO:0006515">
    <property type="term" value="P:protein quality control for misfolded or incompletely synthesized proteins"/>
    <property type="evidence" value="ECO:0007669"/>
    <property type="project" value="UniProtKB-UniRule"/>
</dbReference>
<dbReference type="GO" id="GO:0072344">
    <property type="term" value="P:rescue of stalled ribosome"/>
    <property type="evidence" value="ECO:0007669"/>
    <property type="project" value="UniProtKB-UniRule"/>
</dbReference>
<dbReference type="CDD" id="cd00462">
    <property type="entry name" value="PTH"/>
    <property type="match status" value="1"/>
</dbReference>
<dbReference type="FunFam" id="3.40.50.1470:FF:000001">
    <property type="entry name" value="Peptidyl-tRNA hydrolase"/>
    <property type="match status" value="1"/>
</dbReference>
<dbReference type="Gene3D" id="3.40.50.1470">
    <property type="entry name" value="Peptidyl-tRNA hydrolase"/>
    <property type="match status" value="1"/>
</dbReference>
<dbReference type="HAMAP" id="MF_00083">
    <property type="entry name" value="Pept_tRNA_hydro_bact"/>
    <property type="match status" value="1"/>
</dbReference>
<dbReference type="InterPro" id="IPR001328">
    <property type="entry name" value="Pept_tRNA_hydro"/>
</dbReference>
<dbReference type="InterPro" id="IPR018171">
    <property type="entry name" value="Pept_tRNA_hydro_CS"/>
</dbReference>
<dbReference type="InterPro" id="IPR036416">
    <property type="entry name" value="Pept_tRNA_hydro_sf"/>
</dbReference>
<dbReference type="NCBIfam" id="TIGR00447">
    <property type="entry name" value="pth"/>
    <property type="match status" value="1"/>
</dbReference>
<dbReference type="PANTHER" id="PTHR17224">
    <property type="entry name" value="PEPTIDYL-TRNA HYDROLASE"/>
    <property type="match status" value="1"/>
</dbReference>
<dbReference type="PANTHER" id="PTHR17224:SF1">
    <property type="entry name" value="PEPTIDYL-TRNA HYDROLASE"/>
    <property type="match status" value="1"/>
</dbReference>
<dbReference type="Pfam" id="PF01195">
    <property type="entry name" value="Pept_tRNA_hydro"/>
    <property type="match status" value="1"/>
</dbReference>
<dbReference type="SUPFAM" id="SSF53178">
    <property type="entry name" value="Peptidyl-tRNA hydrolase-like"/>
    <property type="match status" value="1"/>
</dbReference>
<dbReference type="PROSITE" id="PS01196">
    <property type="entry name" value="PEPT_TRNA_HYDROL_2"/>
    <property type="match status" value="1"/>
</dbReference>